<organism>
    <name type="scientific">Mus musculus</name>
    <name type="common">Mouse</name>
    <dbReference type="NCBI Taxonomy" id="10090"/>
    <lineage>
        <taxon>Eukaryota</taxon>
        <taxon>Metazoa</taxon>
        <taxon>Chordata</taxon>
        <taxon>Craniata</taxon>
        <taxon>Vertebrata</taxon>
        <taxon>Euteleostomi</taxon>
        <taxon>Mammalia</taxon>
        <taxon>Eutheria</taxon>
        <taxon>Euarchontoglires</taxon>
        <taxon>Glires</taxon>
        <taxon>Rodentia</taxon>
        <taxon>Myomorpha</taxon>
        <taxon>Muroidea</taxon>
        <taxon>Muridae</taxon>
        <taxon>Murinae</taxon>
        <taxon>Mus</taxon>
        <taxon>Mus</taxon>
    </lineage>
</organism>
<reference key="1">
    <citation type="journal article" date="2006" name="J. Biol. Chem.">
        <title>Molecular identification and characterization of a family of kinases with homology to Ca2+/calmodulin-dependent protein kinases I/IV.</title>
        <authorList>
            <person name="Ohmae S."/>
            <person name="Takemoto-Kimura S."/>
            <person name="Okamura M."/>
            <person name="Adachi-Morishima A."/>
            <person name="Nonaka M."/>
            <person name="Fuse T."/>
            <person name="Kida S."/>
            <person name="Tanji M."/>
            <person name="Furuyashiki T."/>
            <person name="Arakawa Y."/>
            <person name="Narumiya S."/>
            <person name="Okuno H."/>
            <person name="Bito H."/>
        </authorList>
    </citation>
    <scope>NUCLEOTIDE SEQUENCE [MRNA] (ISOFORMS 3; 4 AND 5)</scope>
    <scope>FUNCTION</scope>
    <scope>SUBCELLULAR LOCATION</scope>
    <scope>TISSUE SPECIFICITY</scope>
    <scope>DEVELOPMENTAL STAGE</scope>
    <scope>MUTAGENESIS OF LYS-422</scope>
    <source>
        <strain>ICR</strain>
        <tissue>Brain</tissue>
    </source>
</reference>
<reference key="2">
    <citation type="submission" date="2005-01" db="EMBL/GenBank/DDBJ databases">
        <title>Molecular cloning and expression of mouse doublecortin like protein kinase.</title>
        <authorList>
            <person name="Shimomura S."/>
            <person name="Nagamine T."/>
            <person name="Sueyoshi N."/>
            <person name="Kameshita I."/>
        </authorList>
    </citation>
    <scope>NUCLEOTIDE SEQUENCE [MRNA] (ISOFORM 3)</scope>
    <source>
        <tissue>Brain</tissue>
    </source>
</reference>
<reference key="3">
    <citation type="journal article" date="2005" name="Science">
        <title>The transcriptional landscape of the mammalian genome.</title>
        <authorList>
            <person name="Carninci P."/>
            <person name="Kasukawa T."/>
            <person name="Katayama S."/>
            <person name="Gough J."/>
            <person name="Frith M.C."/>
            <person name="Maeda N."/>
            <person name="Oyama R."/>
            <person name="Ravasi T."/>
            <person name="Lenhard B."/>
            <person name="Wells C."/>
            <person name="Kodzius R."/>
            <person name="Shimokawa K."/>
            <person name="Bajic V.B."/>
            <person name="Brenner S.E."/>
            <person name="Batalov S."/>
            <person name="Forrest A.R."/>
            <person name="Zavolan M."/>
            <person name="Davis M.J."/>
            <person name="Wilming L.G."/>
            <person name="Aidinis V."/>
            <person name="Allen J.E."/>
            <person name="Ambesi-Impiombato A."/>
            <person name="Apweiler R."/>
            <person name="Aturaliya R.N."/>
            <person name="Bailey T.L."/>
            <person name="Bansal M."/>
            <person name="Baxter L."/>
            <person name="Beisel K.W."/>
            <person name="Bersano T."/>
            <person name="Bono H."/>
            <person name="Chalk A.M."/>
            <person name="Chiu K.P."/>
            <person name="Choudhary V."/>
            <person name="Christoffels A."/>
            <person name="Clutterbuck D.R."/>
            <person name="Crowe M.L."/>
            <person name="Dalla E."/>
            <person name="Dalrymple B.P."/>
            <person name="de Bono B."/>
            <person name="Della Gatta G."/>
            <person name="di Bernardo D."/>
            <person name="Down T."/>
            <person name="Engstrom P."/>
            <person name="Fagiolini M."/>
            <person name="Faulkner G."/>
            <person name="Fletcher C.F."/>
            <person name="Fukushima T."/>
            <person name="Furuno M."/>
            <person name="Futaki S."/>
            <person name="Gariboldi M."/>
            <person name="Georgii-Hemming P."/>
            <person name="Gingeras T.R."/>
            <person name="Gojobori T."/>
            <person name="Green R.E."/>
            <person name="Gustincich S."/>
            <person name="Harbers M."/>
            <person name="Hayashi Y."/>
            <person name="Hensch T.K."/>
            <person name="Hirokawa N."/>
            <person name="Hill D."/>
            <person name="Huminiecki L."/>
            <person name="Iacono M."/>
            <person name="Ikeo K."/>
            <person name="Iwama A."/>
            <person name="Ishikawa T."/>
            <person name="Jakt M."/>
            <person name="Kanapin A."/>
            <person name="Katoh M."/>
            <person name="Kawasawa Y."/>
            <person name="Kelso J."/>
            <person name="Kitamura H."/>
            <person name="Kitano H."/>
            <person name="Kollias G."/>
            <person name="Krishnan S.P."/>
            <person name="Kruger A."/>
            <person name="Kummerfeld S.K."/>
            <person name="Kurochkin I.V."/>
            <person name="Lareau L.F."/>
            <person name="Lazarevic D."/>
            <person name="Lipovich L."/>
            <person name="Liu J."/>
            <person name="Liuni S."/>
            <person name="McWilliam S."/>
            <person name="Madan Babu M."/>
            <person name="Madera M."/>
            <person name="Marchionni L."/>
            <person name="Matsuda H."/>
            <person name="Matsuzawa S."/>
            <person name="Miki H."/>
            <person name="Mignone F."/>
            <person name="Miyake S."/>
            <person name="Morris K."/>
            <person name="Mottagui-Tabar S."/>
            <person name="Mulder N."/>
            <person name="Nakano N."/>
            <person name="Nakauchi H."/>
            <person name="Ng P."/>
            <person name="Nilsson R."/>
            <person name="Nishiguchi S."/>
            <person name="Nishikawa S."/>
            <person name="Nori F."/>
            <person name="Ohara O."/>
            <person name="Okazaki Y."/>
            <person name="Orlando V."/>
            <person name="Pang K.C."/>
            <person name="Pavan W.J."/>
            <person name="Pavesi G."/>
            <person name="Pesole G."/>
            <person name="Petrovsky N."/>
            <person name="Piazza S."/>
            <person name="Reed J."/>
            <person name="Reid J.F."/>
            <person name="Ring B.Z."/>
            <person name="Ringwald M."/>
            <person name="Rost B."/>
            <person name="Ruan Y."/>
            <person name="Salzberg S.L."/>
            <person name="Sandelin A."/>
            <person name="Schneider C."/>
            <person name="Schoenbach C."/>
            <person name="Sekiguchi K."/>
            <person name="Semple C.A."/>
            <person name="Seno S."/>
            <person name="Sessa L."/>
            <person name="Sheng Y."/>
            <person name="Shibata Y."/>
            <person name="Shimada H."/>
            <person name="Shimada K."/>
            <person name="Silva D."/>
            <person name="Sinclair B."/>
            <person name="Sperling S."/>
            <person name="Stupka E."/>
            <person name="Sugiura K."/>
            <person name="Sultana R."/>
            <person name="Takenaka Y."/>
            <person name="Taki K."/>
            <person name="Tammoja K."/>
            <person name="Tan S.L."/>
            <person name="Tang S."/>
            <person name="Taylor M.S."/>
            <person name="Tegner J."/>
            <person name="Teichmann S.A."/>
            <person name="Ueda H.R."/>
            <person name="van Nimwegen E."/>
            <person name="Verardo R."/>
            <person name="Wei C.L."/>
            <person name="Yagi K."/>
            <person name="Yamanishi H."/>
            <person name="Zabarovsky E."/>
            <person name="Zhu S."/>
            <person name="Zimmer A."/>
            <person name="Hide W."/>
            <person name="Bult C."/>
            <person name="Grimmond S.M."/>
            <person name="Teasdale R.D."/>
            <person name="Liu E.T."/>
            <person name="Brusic V."/>
            <person name="Quackenbush J."/>
            <person name="Wahlestedt C."/>
            <person name="Mattick J.S."/>
            <person name="Hume D.A."/>
            <person name="Kai C."/>
            <person name="Sasaki D."/>
            <person name="Tomaru Y."/>
            <person name="Fukuda S."/>
            <person name="Kanamori-Katayama M."/>
            <person name="Suzuki M."/>
            <person name="Aoki J."/>
            <person name="Arakawa T."/>
            <person name="Iida J."/>
            <person name="Imamura K."/>
            <person name="Itoh M."/>
            <person name="Kato T."/>
            <person name="Kawaji H."/>
            <person name="Kawagashira N."/>
            <person name="Kawashima T."/>
            <person name="Kojima M."/>
            <person name="Kondo S."/>
            <person name="Konno H."/>
            <person name="Nakano K."/>
            <person name="Ninomiya N."/>
            <person name="Nishio T."/>
            <person name="Okada M."/>
            <person name="Plessy C."/>
            <person name="Shibata K."/>
            <person name="Shiraki T."/>
            <person name="Suzuki S."/>
            <person name="Tagami M."/>
            <person name="Waki K."/>
            <person name="Watahiki A."/>
            <person name="Okamura-Oho Y."/>
            <person name="Suzuki H."/>
            <person name="Kawai J."/>
            <person name="Hayashizaki Y."/>
        </authorList>
    </citation>
    <scope>NUCLEOTIDE SEQUENCE [LARGE SCALE MRNA] (ISOFORMS 2 AND 6)</scope>
    <source>
        <strain>C57BL/6J</strain>
        <tissue>Cerebellum</tissue>
        <tissue>Embryonic stem cell</tissue>
    </source>
</reference>
<reference key="4">
    <citation type="journal article" date="2004" name="Genome Res.">
        <title>The status, quality, and expansion of the NIH full-length cDNA project: the Mammalian Gene Collection (MGC).</title>
        <authorList>
            <consortium name="The MGC Project Team"/>
        </authorList>
    </citation>
    <scope>NUCLEOTIDE SEQUENCE [LARGE SCALE MRNA] (ISOFORM 1)</scope>
    <source>
        <strain>C57BL/6J</strain>
        <tissue>Brain</tissue>
    </source>
</reference>
<reference key="5">
    <citation type="journal article" date="2006" name="BMC Genomics">
        <title>The evolving doublecortin (DCX) superfamily.</title>
        <authorList>
            <person name="Reiner O."/>
            <person name="Coquelle F.M."/>
            <person name="Peter B."/>
            <person name="Levy T."/>
            <person name="Kaplan A."/>
            <person name="Sapir T."/>
            <person name="Orr I."/>
            <person name="Barkai N."/>
            <person name="Eichele G."/>
            <person name="Bergmann S."/>
        </authorList>
    </citation>
    <scope>DEVELOPMENTAL STAGE</scope>
    <scope>TISSUE SPECIFICITY</scope>
    <scope>GENE FAMILY</scope>
</reference>
<reference key="6">
    <citation type="journal article" date="2006" name="Cell Cycle">
        <title>Common and divergent roles for members of the mouse DCX superfamily.</title>
        <authorList>
            <person name="Coquelle F.M."/>
            <person name="Levy T."/>
            <person name="Bergmann S."/>
            <person name="Wolf S.G."/>
            <person name="Bar-El D."/>
            <person name="Sapir T."/>
            <person name="Brody Y."/>
            <person name="Orr I."/>
            <person name="Barkai N."/>
            <person name="Eichele G."/>
            <person name="Reiner O."/>
        </authorList>
    </citation>
    <scope>SUBCELLULAR LOCATION</scope>
    <scope>INTERACTION WITH MAPK8IP1; MAPK8IP2; MAPK9; PPP1R9B AND ACTIN</scope>
</reference>
<reference key="7">
    <citation type="journal article" date="2008" name="Dev. Neurosci.">
        <title>Alternative transcripts of Dclk1 and Dclk2 and their expression in doublecortin knockout mice.</title>
        <authorList>
            <person name="Tuy F.P.D."/>
            <person name="Saillour Y."/>
            <person name="Kappeler C."/>
            <person name="Chelly J."/>
            <person name="Francis F."/>
        </authorList>
    </citation>
    <scope>TISSUE SPECIFICITY</scope>
    <scope>DEVELOPMENTAL STAGE</scope>
</reference>
<reference key="8">
    <citation type="journal article" date="2009" name="Proc. Natl. Acad. Sci. U.S.A.">
        <title>Mice lacking doublecortin and doublecortin-like kinase 2 display altered hippocampal neuronal maturation and spontaneous seizures.</title>
        <authorList>
            <person name="Kerjan G."/>
            <person name="Koizumi H."/>
            <person name="Han E.B."/>
            <person name="Dube C.M."/>
            <person name="Djakovic S.N."/>
            <person name="Patrick G.N."/>
            <person name="Baram T.Z."/>
            <person name="Heinemann S.F."/>
            <person name="Gleeson J.G."/>
        </authorList>
    </citation>
    <scope>DISRUPTION PHENOTYPE</scope>
    <scope>TISSUE SPECIFICITY</scope>
</reference>
<reference key="9">
    <citation type="journal article" date="2010" name="Cell">
        <title>A tissue-specific atlas of mouse protein phosphorylation and expression.</title>
        <authorList>
            <person name="Huttlin E.L."/>
            <person name="Jedrychowski M.P."/>
            <person name="Elias J.E."/>
            <person name="Goswami T."/>
            <person name="Rad R."/>
            <person name="Beausoleil S.A."/>
            <person name="Villen J."/>
            <person name="Haas W."/>
            <person name="Sowa M.E."/>
            <person name="Gygi S.P."/>
        </authorList>
    </citation>
    <scope>IDENTIFICATION BY MASS SPECTROMETRY [LARGE SCALE ANALYSIS]</scope>
    <source>
        <tissue>Brain</tissue>
    </source>
</reference>
<reference key="10">
    <citation type="journal article" date="2010" name="Cent. Nerv. Syst. Agents Med. Chem.">
        <title>The doublecortin gene family and disorders of neuronal structure.</title>
        <authorList>
            <person name="Dijkmans T.F."/>
            <person name="van Hooijdonk L.W.A."/>
            <person name="Fitzsimons C.P."/>
            <person name="Vreugdenhil E."/>
        </authorList>
    </citation>
    <scope>REVIEW</scope>
    <scope>GENE FAMILY</scope>
</reference>
<gene>
    <name type="primary">Dclk2</name>
    <name type="synonym">Dcamkl2</name>
</gene>
<sequence>MASTRSIELEHFEERDKRPRPGSRRGAPSSSGGSSISGPKGNGLIPSPAHSAHCSFYRTRTLQALSSEKKAKKARFYRNGDRYFKGLVFAISNDRFRSFDALLIELTRSLSDNVNLPQGVRTIYTIDGSRKVTSLDELLEGESYVCASNEPFRKVDYTKNVNPNWSVNIKGGTTRTLAVASAKSEVKESKDFIKPKLVTVIRSGVKPRKAVRILLNKKTAHSFEQVLTDITEAIKLDSGVVKRLCTLDGKQVTCLQDFFGDDDVFIACGPEKYRYAQDDFVLDHSECRVLKSSYSRASAAKYSGSRSPGFSRRSKSPASVNGTPSSQLSTPKSTKSSSSSPTSPGSFRGLKQISAQGRSSSNVNGGPELDRCLSPEGVNGNRCSESFPLLEKYRIGKVIGDGNFAVVKECVDRYTGKEFALKIIDKAKCCGKEHLIENEVSILRRVKHPNIIMLVEEMETATDLFLVMELVKGGDLFDAITSSTKYTERDGSAMVYNLANALRYLHSLSIVHRDIKPENLLVCEYPDGTKSLKLGDFGLATVVEGPLYTVCGTPTYVAPEIIAETGYGLKVDVWAAGVITYILLCGFPPFRSENNLQEDLFDQILAGKLEFPAPYWDNITDSAKELISQMLQVNVEARCTAGEILSHPWVSDDASQENNMQAEVTGKLKQHFNNALPKQNSTTTGVSVIMNTALDKEGQIFCSKLCQDSSRPSREQTSPVPPSAQEAPPPLESPRPPGPPATSGCDLAGTWRRHRD</sequence>
<protein>
    <recommendedName>
        <fullName>Serine/threonine-protein kinase DCLK2</fullName>
        <ecNumber>2.7.11.1</ecNumber>
    </recommendedName>
    <alternativeName>
        <fullName>CaMK-like CREB regulatory kinase 2</fullName>
        <shortName>CL2</shortName>
        <shortName>CLICK-II</shortName>
        <shortName>CLICK2</shortName>
    </alternativeName>
    <alternativeName>
        <fullName>Doublecortin-like and CAM kinase-like 2</fullName>
    </alternativeName>
    <alternativeName>
        <fullName>Doublecortin-like kinase 2</fullName>
    </alternativeName>
</protein>
<proteinExistence type="evidence at protein level"/>
<dbReference type="EC" id="2.7.11.1"/>
<dbReference type="EMBL" id="AY968049">
    <property type="protein sequence ID" value="AAY40243.1"/>
    <property type="molecule type" value="mRNA"/>
</dbReference>
<dbReference type="EMBL" id="AY968050">
    <property type="protein sequence ID" value="AAY40244.1"/>
    <property type="molecule type" value="mRNA"/>
</dbReference>
<dbReference type="EMBL" id="AY968051">
    <property type="protein sequence ID" value="AAY40245.1"/>
    <property type="molecule type" value="mRNA"/>
</dbReference>
<dbReference type="EMBL" id="AB198721">
    <property type="protein sequence ID" value="BAE06836.1"/>
    <property type="molecule type" value="mRNA"/>
</dbReference>
<dbReference type="EMBL" id="AK049179">
    <property type="protein sequence ID" value="BAC33590.1"/>
    <property type="molecule type" value="mRNA"/>
</dbReference>
<dbReference type="EMBL" id="AK082633">
    <property type="protein sequence ID" value="BAC38555.1"/>
    <property type="molecule type" value="mRNA"/>
</dbReference>
<dbReference type="EMBL" id="BC056921">
    <property type="protein sequence ID" value="AAH56921.1"/>
    <property type="molecule type" value="mRNA"/>
</dbReference>
<dbReference type="CCDS" id="CCDS17448.1">
    <molecule id="Q6PGN3-1"/>
</dbReference>
<dbReference type="CCDS" id="CCDS79936.1">
    <molecule id="Q6PGN3-2"/>
</dbReference>
<dbReference type="RefSeq" id="NP_001182425.1">
    <molecule id="Q6PGN3-3"/>
    <property type="nucleotide sequence ID" value="NM_001195496.1"/>
</dbReference>
<dbReference type="RefSeq" id="NP_001182426.1">
    <molecule id="Q6PGN3-2"/>
    <property type="nucleotide sequence ID" value="NM_001195497.1"/>
</dbReference>
<dbReference type="RefSeq" id="NP_001182427.1">
    <molecule id="Q6PGN3-4"/>
    <property type="nucleotide sequence ID" value="NM_001195498.1"/>
</dbReference>
<dbReference type="RefSeq" id="NP_001182428.1">
    <molecule id="Q6PGN3-5"/>
    <property type="nucleotide sequence ID" value="NM_001195499.1"/>
</dbReference>
<dbReference type="RefSeq" id="NP_081815.3">
    <molecule id="Q6PGN3-1"/>
    <property type="nucleotide sequence ID" value="NM_027539.5"/>
</dbReference>
<dbReference type="SMR" id="Q6PGN3"/>
<dbReference type="BioGRID" id="214240">
    <property type="interactions" value="7"/>
</dbReference>
<dbReference type="FunCoup" id="Q6PGN3">
    <property type="interactions" value="1471"/>
</dbReference>
<dbReference type="STRING" id="10090.ENSMUSP00000029719"/>
<dbReference type="iPTMnet" id="Q6PGN3"/>
<dbReference type="PhosphoSitePlus" id="Q6PGN3"/>
<dbReference type="SwissPalm" id="Q6PGN3"/>
<dbReference type="jPOST" id="Q6PGN3"/>
<dbReference type="PaxDb" id="10090-ENSMUSP00000029719"/>
<dbReference type="PeptideAtlas" id="Q6PGN3"/>
<dbReference type="ProteomicsDB" id="279494">
    <molecule id="Q6PGN3-1"/>
</dbReference>
<dbReference type="ProteomicsDB" id="279495">
    <molecule id="Q6PGN3-2"/>
</dbReference>
<dbReference type="ProteomicsDB" id="279496">
    <molecule id="Q6PGN3-3"/>
</dbReference>
<dbReference type="ProteomicsDB" id="279497">
    <molecule id="Q6PGN3-4"/>
</dbReference>
<dbReference type="ProteomicsDB" id="279498">
    <molecule id="Q6PGN3-5"/>
</dbReference>
<dbReference type="ProteomicsDB" id="279499">
    <molecule id="Q6PGN3-6"/>
</dbReference>
<dbReference type="Pumba" id="Q6PGN3"/>
<dbReference type="Antibodypedia" id="16499">
    <property type="antibodies" value="177 antibodies from 34 providers"/>
</dbReference>
<dbReference type="DNASU" id="70762"/>
<dbReference type="Ensembl" id="ENSMUST00000029719.14">
    <molecule id="Q6PGN3-1"/>
    <property type="protein sequence ID" value="ENSMUSP00000029719.9"/>
    <property type="gene ID" value="ENSMUSG00000028078.15"/>
</dbReference>
<dbReference type="Ensembl" id="ENSMUST00000191752.6">
    <molecule id="Q6PGN3-6"/>
    <property type="protein sequence ID" value="ENSMUSP00000141707.2"/>
    <property type="gene ID" value="ENSMUSG00000028078.15"/>
</dbReference>
<dbReference type="Ensembl" id="ENSMUST00000195561.6">
    <molecule id="Q6PGN3-2"/>
    <property type="protein sequence ID" value="ENSMUSP00000142267.2"/>
    <property type="gene ID" value="ENSMUSG00000028078.15"/>
</dbReference>
<dbReference type="GeneID" id="70762"/>
<dbReference type="KEGG" id="mmu:70762"/>
<dbReference type="UCSC" id="uc008prl.3">
    <molecule id="Q6PGN3-1"/>
    <property type="organism name" value="mouse"/>
</dbReference>
<dbReference type="UCSC" id="uc008prm.3">
    <molecule id="Q6PGN3-5"/>
    <property type="organism name" value="mouse"/>
</dbReference>
<dbReference type="UCSC" id="uc008prn.3">
    <molecule id="Q6PGN3-4"/>
    <property type="organism name" value="mouse"/>
</dbReference>
<dbReference type="UCSC" id="uc008pro.3">
    <molecule id="Q6PGN3-3"/>
    <property type="organism name" value="mouse"/>
</dbReference>
<dbReference type="UCSC" id="uc008prp.3">
    <molecule id="Q6PGN3-2"/>
    <property type="organism name" value="mouse"/>
</dbReference>
<dbReference type="UCSC" id="uc008prq.3">
    <molecule id="Q6PGN3-6"/>
    <property type="organism name" value="mouse"/>
</dbReference>
<dbReference type="AGR" id="MGI:1918012"/>
<dbReference type="CTD" id="166614"/>
<dbReference type="MGI" id="MGI:1918012">
    <property type="gene designation" value="Dclk2"/>
</dbReference>
<dbReference type="VEuPathDB" id="HostDB:ENSMUSG00000028078"/>
<dbReference type="eggNOG" id="KOG0032">
    <property type="taxonomic scope" value="Eukaryota"/>
</dbReference>
<dbReference type="GeneTree" id="ENSGT00940000154895"/>
<dbReference type="InParanoid" id="Q6PGN3"/>
<dbReference type="OMA" id="XESYVCA"/>
<dbReference type="OrthoDB" id="1738954at2759"/>
<dbReference type="PhylomeDB" id="Q6PGN3"/>
<dbReference type="TreeFam" id="TF318770"/>
<dbReference type="BioGRID-ORCS" id="70762">
    <property type="hits" value="5 hits in 81 CRISPR screens"/>
</dbReference>
<dbReference type="CD-CODE" id="CE726F99">
    <property type="entry name" value="Postsynaptic density"/>
</dbReference>
<dbReference type="ChiTaRS" id="Dclk2">
    <property type="organism name" value="mouse"/>
</dbReference>
<dbReference type="PRO" id="PR:Q6PGN3"/>
<dbReference type="Proteomes" id="UP000000589">
    <property type="component" value="Chromosome 3"/>
</dbReference>
<dbReference type="RNAct" id="Q6PGN3">
    <property type="molecule type" value="protein"/>
</dbReference>
<dbReference type="Bgee" id="ENSMUSG00000028078">
    <property type="expression patterns" value="Expressed in animal zygote and 194 other cell types or tissues"/>
</dbReference>
<dbReference type="ExpressionAtlas" id="Q6PGN3">
    <property type="expression patterns" value="baseline and differential"/>
</dbReference>
<dbReference type="GO" id="GO:0005737">
    <property type="term" value="C:cytoplasm"/>
    <property type="evidence" value="ECO:0007669"/>
    <property type="project" value="UniProtKB-KW"/>
</dbReference>
<dbReference type="GO" id="GO:0005856">
    <property type="term" value="C:cytoskeleton"/>
    <property type="evidence" value="ECO:0007669"/>
    <property type="project" value="UniProtKB-SubCell"/>
</dbReference>
<dbReference type="GO" id="GO:0005524">
    <property type="term" value="F:ATP binding"/>
    <property type="evidence" value="ECO:0007669"/>
    <property type="project" value="UniProtKB-KW"/>
</dbReference>
<dbReference type="GO" id="GO:0008017">
    <property type="term" value="F:microtubule binding"/>
    <property type="evidence" value="ECO:0000314"/>
    <property type="project" value="MGI"/>
</dbReference>
<dbReference type="GO" id="GO:0004672">
    <property type="term" value="F:protein kinase activity"/>
    <property type="evidence" value="ECO:0000314"/>
    <property type="project" value="MGI"/>
</dbReference>
<dbReference type="GO" id="GO:0106310">
    <property type="term" value="F:protein serine kinase activity"/>
    <property type="evidence" value="ECO:0007669"/>
    <property type="project" value="RHEA"/>
</dbReference>
<dbReference type="GO" id="GO:0004674">
    <property type="term" value="F:protein serine/threonine kinase activity"/>
    <property type="evidence" value="ECO:0007669"/>
    <property type="project" value="UniProtKB-KW"/>
</dbReference>
<dbReference type="GO" id="GO:0021766">
    <property type="term" value="P:hippocampus development"/>
    <property type="evidence" value="ECO:0000316"/>
    <property type="project" value="MGI"/>
</dbReference>
<dbReference type="GO" id="GO:0035556">
    <property type="term" value="P:intracellular signal transduction"/>
    <property type="evidence" value="ECO:0007669"/>
    <property type="project" value="InterPro"/>
</dbReference>
<dbReference type="GO" id="GO:0000226">
    <property type="term" value="P:microtubule cytoskeleton organization"/>
    <property type="evidence" value="ECO:0000314"/>
    <property type="project" value="MGI"/>
</dbReference>
<dbReference type="GO" id="GO:1900181">
    <property type="term" value="P:negative regulation of protein localization to nucleus"/>
    <property type="evidence" value="ECO:0000314"/>
    <property type="project" value="MGI"/>
</dbReference>
<dbReference type="GO" id="GO:0034504">
    <property type="term" value="P:protein localization to nucleus"/>
    <property type="evidence" value="ECO:0000314"/>
    <property type="project" value="MGI"/>
</dbReference>
<dbReference type="GO" id="GO:0021860">
    <property type="term" value="P:pyramidal neuron development"/>
    <property type="evidence" value="ECO:0000316"/>
    <property type="project" value="MGI"/>
</dbReference>
<dbReference type="CDD" id="cd17141">
    <property type="entry name" value="DCX1_DCLK2"/>
    <property type="match status" value="1"/>
</dbReference>
<dbReference type="CDD" id="cd17069">
    <property type="entry name" value="DCX2"/>
    <property type="match status" value="1"/>
</dbReference>
<dbReference type="FunFam" id="1.10.510.10:FF:000066">
    <property type="entry name" value="Serine/threonine-protein kinase DCLK1 isoform 2"/>
    <property type="match status" value="1"/>
</dbReference>
<dbReference type="FunFam" id="3.30.200.20:FF:000057">
    <property type="entry name" value="Serine/threonine-protein kinase DCLK1 isoform 2"/>
    <property type="match status" value="1"/>
</dbReference>
<dbReference type="FunFam" id="3.10.20.230:FF:000001">
    <property type="entry name" value="serine/threonine-protein kinase DCLK1 isoform X1"/>
    <property type="match status" value="1"/>
</dbReference>
<dbReference type="FunFam" id="3.10.20.230:FF:000002">
    <property type="entry name" value="serine/threonine-protein kinase DCLK2 isoform X1"/>
    <property type="match status" value="1"/>
</dbReference>
<dbReference type="Gene3D" id="3.10.20.230">
    <property type="entry name" value="Doublecortin domain"/>
    <property type="match status" value="2"/>
</dbReference>
<dbReference type="Gene3D" id="3.30.200.20">
    <property type="entry name" value="Phosphorylase Kinase, domain 1"/>
    <property type="match status" value="1"/>
</dbReference>
<dbReference type="Gene3D" id="1.10.510.10">
    <property type="entry name" value="Transferase(Phosphotransferase) domain 1"/>
    <property type="match status" value="1"/>
</dbReference>
<dbReference type="InterPro" id="IPR003533">
    <property type="entry name" value="Doublecortin_dom"/>
</dbReference>
<dbReference type="InterPro" id="IPR036572">
    <property type="entry name" value="Doublecortin_dom_sf"/>
</dbReference>
<dbReference type="InterPro" id="IPR011009">
    <property type="entry name" value="Kinase-like_dom_sf"/>
</dbReference>
<dbReference type="InterPro" id="IPR000719">
    <property type="entry name" value="Prot_kinase_dom"/>
</dbReference>
<dbReference type="InterPro" id="IPR017441">
    <property type="entry name" value="Protein_kinase_ATP_BS"/>
</dbReference>
<dbReference type="InterPro" id="IPR008271">
    <property type="entry name" value="Ser/Thr_kinase_AS"/>
</dbReference>
<dbReference type="PANTHER" id="PTHR24347">
    <property type="entry name" value="SERINE/THREONINE-PROTEIN KINASE"/>
    <property type="match status" value="1"/>
</dbReference>
<dbReference type="Pfam" id="PF03607">
    <property type="entry name" value="DCX"/>
    <property type="match status" value="2"/>
</dbReference>
<dbReference type="Pfam" id="PF00069">
    <property type="entry name" value="Pkinase"/>
    <property type="match status" value="1"/>
</dbReference>
<dbReference type="SMART" id="SM00537">
    <property type="entry name" value="DCX"/>
    <property type="match status" value="2"/>
</dbReference>
<dbReference type="SMART" id="SM00220">
    <property type="entry name" value="S_TKc"/>
    <property type="match status" value="1"/>
</dbReference>
<dbReference type="SUPFAM" id="SSF89837">
    <property type="entry name" value="Doublecortin (DC)"/>
    <property type="match status" value="2"/>
</dbReference>
<dbReference type="SUPFAM" id="SSF56112">
    <property type="entry name" value="Protein kinase-like (PK-like)"/>
    <property type="match status" value="1"/>
</dbReference>
<dbReference type="PROSITE" id="PS50309">
    <property type="entry name" value="DC"/>
    <property type="match status" value="2"/>
</dbReference>
<dbReference type="PROSITE" id="PS00107">
    <property type="entry name" value="PROTEIN_KINASE_ATP"/>
    <property type="match status" value="1"/>
</dbReference>
<dbReference type="PROSITE" id="PS50011">
    <property type="entry name" value="PROTEIN_KINASE_DOM"/>
    <property type="match status" value="1"/>
</dbReference>
<dbReference type="PROSITE" id="PS00108">
    <property type="entry name" value="PROTEIN_KINASE_ST"/>
    <property type="match status" value="1"/>
</dbReference>
<comment type="function">
    <text evidence="9">Protein kinase with a significantly reduced Ca(2+)+/CAM affinity and dependence compared to other members of the CaMK family. May play a role in the down-regulation of CRE-dependent gene activation probably by phosphorylation of the CREB coactivator CRTC2/TORC2 and the resulting retention of TORC2 in the cytoplasm.</text>
</comment>
<comment type="catalytic activity">
    <reaction>
        <text>L-seryl-[protein] + ATP = O-phospho-L-seryl-[protein] + ADP + H(+)</text>
        <dbReference type="Rhea" id="RHEA:17989"/>
        <dbReference type="Rhea" id="RHEA-COMP:9863"/>
        <dbReference type="Rhea" id="RHEA-COMP:11604"/>
        <dbReference type="ChEBI" id="CHEBI:15378"/>
        <dbReference type="ChEBI" id="CHEBI:29999"/>
        <dbReference type="ChEBI" id="CHEBI:30616"/>
        <dbReference type="ChEBI" id="CHEBI:83421"/>
        <dbReference type="ChEBI" id="CHEBI:456216"/>
        <dbReference type="EC" id="2.7.11.1"/>
    </reaction>
</comment>
<comment type="catalytic activity">
    <reaction>
        <text>L-threonyl-[protein] + ATP = O-phospho-L-threonyl-[protein] + ADP + H(+)</text>
        <dbReference type="Rhea" id="RHEA:46608"/>
        <dbReference type="Rhea" id="RHEA-COMP:11060"/>
        <dbReference type="Rhea" id="RHEA-COMP:11605"/>
        <dbReference type="ChEBI" id="CHEBI:15378"/>
        <dbReference type="ChEBI" id="CHEBI:30013"/>
        <dbReference type="ChEBI" id="CHEBI:30616"/>
        <dbReference type="ChEBI" id="CHEBI:61977"/>
        <dbReference type="ChEBI" id="CHEBI:456216"/>
        <dbReference type="EC" id="2.7.11.1"/>
    </reaction>
</comment>
<comment type="subunit">
    <text evidence="1 8">Binds to and stabilizes microtubules (By similarity). Interacts with MAPK8IP1/JIP-1, MAPK8IP2/JIP-2, MAPK9/JNK2, PPP1R9B/NEURABIN-2 and actin.</text>
</comment>
<comment type="subcellular location">
    <subcellularLocation>
        <location evidence="8 9">Cytoplasm</location>
        <location evidence="8 9">Cytoskeleton</location>
    </subcellularLocation>
    <text>Colocalizes with microtubules.</text>
</comment>
<comment type="alternative products">
    <event type="alternative splicing"/>
    <isoform>
        <id>Q6PGN3-1</id>
        <name>1</name>
        <sequence type="displayed"/>
    </isoform>
    <isoform>
        <id>Q6PGN3-2</id>
        <name>2</name>
        <sequence type="described" ref="VSP_012797"/>
    </isoform>
    <isoform>
        <id>Q6PGN3-3</id>
        <name>3</name>
        <name>alpha</name>
        <sequence type="described" ref="VSP_038892 VSP_012797"/>
    </isoform>
    <isoform>
        <id>Q6PGN3-4</id>
        <name>4</name>
        <name>beta1</name>
        <sequence type="described" ref="VSP_038892 VSP_038895 VSP_038896"/>
    </isoform>
    <isoform>
        <id>Q6PGN3-5</id>
        <name>5</name>
        <name>beta2</name>
        <sequence type="described" ref="VSP_038892 VSP_012797 VSP_038895 VSP_038896"/>
    </isoform>
    <isoform>
        <id>Q6PGN3-6</id>
        <name>6</name>
        <sequence type="described" ref="VSP_038893 VSP_038894"/>
    </isoform>
</comment>
<comment type="tissue specificity">
    <text evidence="9 10 11 12">Expressed in the central and peripheral nervous system including the brain, spinal cord, cranial and dorsal root ganglia and in the parasympathetic ganglia. Present in neurons, but not in glial cells, in most forebrain areas. Strong expression in the hippocampal CA1 pyramidal cell layer. Expressed in the photoreceptor sensory cilium complex and in eyes. Also detected in individual cells of the olfactory epithelium.</text>
</comment>
<comment type="developmental stage">
    <text evidence="9 10 11">At 17.5 dpc, predominantly expressed in the central nervous system, throughout the forebrain, midbrain, hindbrain, and the spinal cord. Expressed in the developing neocortex and at low levels in the ventricular zone, especially in the outer neuroblastic layer. In the developing retina, strongly expressed in the postmitotic inner neuroblastic layer. Also found in the developing ovary and, to a lower extent, throughout the kidney.</text>
</comment>
<comment type="domain">
    <text>The doublecortin domains are involved in the colocalization with microtubules.</text>
</comment>
<comment type="PTM">
    <text evidence="1">Autophosphorylated.</text>
</comment>
<comment type="disruption phenotype">
    <text evidence="12">Frequent spontaneous seizures that originate in the hippocampus, with most animals dying in the first few months of life.</text>
</comment>
<comment type="similarity">
    <text evidence="16">Belongs to the protein kinase superfamily. CAMK Ser/Thr protein kinase family. CaMK subfamily.</text>
</comment>
<accession>Q6PGN3</accession>
<accession>Q1EDG7</accession>
<accession>Q1EDG8</accession>
<accession>Q4H483</accession>
<accession>Q4W8V1</accession>
<accession>Q8BUU0</accession>
<accession>Q8BX25</accession>
<name>DCLK2_MOUSE</name>
<evidence type="ECO:0000250" key="1"/>
<evidence type="ECO:0000250" key="2">
    <source>
        <dbReference type="UniProtKB" id="Q5MPA9"/>
    </source>
</evidence>
<evidence type="ECO:0000250" key="3">
    <source>
        <dbReference type="UniProtKB" id="Q8N568"/>
    </source>
</evidence>
<evidence type="ECO:0000255" key="4">
    <source>
        <dbReference type="PROSITE-ProRule" id="PRU00072"/>
    </source>
</evidence>
<evidence type="ECO:0000255" key="5">
    <source>
        <dbReference type="PROSITE-ProRule" id="PRU00159"/>
    </source>
</evidence>
<evidence type="ECO:0000255" key="6">
    <source>
        <dbReference type="PROSITE-ProRule" id="PRU10027"/>
    </source>
</evidence>
<evidence type="ECO:0000256" key="7">
    <source>
        <dbReference type="SAM" id="MobiDB-lite"/>
    </source>
</evidence>
<evidence type="ECO:0000269" key="8">
    <source>
    </source>
</evidence>
<evidence type="ECO:0000269" key="9">
    <source>
    </source>
</evidence>
<evidence type="ECO:0000269" key="10">
    <source>
    </source>
</evidence>
<evidence type="ECO:0000269" key="11">
    <source>
    </source>
</evidence>
<evidence type="ECO:0000269" key="12">
    <source>
    </source>
</evidence>
<evidence type="ECO:0000303" key="13">
    <source>
    </source>
</evidence>
<evidence type="ECO:0000303" key="14">
    <source>
    </source>
</evidence>
<evidence type="ECO:0000303" key="15">
    <source ref="2"/>
</evidence>
<evidence type="ECO:0000305" key="16"/>
<feature type="chain" id="PRO_0000085923" description="Serine/threonine-protein kinase DCLK2">
    <location>
        <begin position="1"/>
        <end position="756"/>
    </location>
</feature>
<feature type="domain" description="Doublecortin 1" evidence="4">
    <location>
        <begin position="72"/>
        <end position="158"/>
    </location>
</feature>
<feature type="domain" description="Doublecortin 2" evidence="4">
    <location>
        <begin position="196"/>
        <end position="279"/>
    </location>
</feature>
<feature type="domain" description="Protein kinase" evidence="5">
    <location>
        <begin position="393"/>
        <end position="650"/>
    </location>
</feature>
<feature type="region of interest" description="Disordered" evidence="7">
    <location>
        <begin position="1"/>
        <end position="44"/>
    </location>
</feature>
<feature type="region of interest" description="Disordered" evidence="7">
    <location>
        <begin position="301"/>
        <end position="375"/>
    </location>
</feature>
<feature type="region of interest" description="Disordered" evidence="7">
    <location>
        <begin position="707"/>
        <end position="756"/>
    </location>
</feature>
<feature type="compositionally biased region" description="Basic and acidic residues" evidence="7">
    <location>
        <begin position="7"/>
        <end position="19"/>
    </location>
</feature>
<feature type="compositionally biased region" description="Low complexity" evidence="7">
    <location>
        <begin position="24"/>
        <end position="43"/>
    </location>
</feature>
<feature type="compositionally biased region" description="Low complexity" evidence="7">
    <location>
        <begin position="301"/>
        <end position="311"/>
    </location>
</feature>
<feature type="compositionally biased region" description="Low complexity" evidence="7">
    <location>
        <begin position="323"/>
        <end position="346"/>
    </location>
</feature>
<feature type="compositionally biased region" description="Polar residues" evidence="7">
    <location>
        <begin position="353"/>
        <end position="364"/>
    </location>
</feature>
<feature type="compositionally biased region" description="Pro residues" evidence="7">
    <location>
        <begin position="719"/>
        <end position="740"/>
    </location>
</feature>
<feature type="active site" description="Proton acceptor" evidence="5 6">
    <location>
        <position position="514"/>
    </location>
</feature>
<feature type="binding site" evidence="5">
    <location>
        <begin position="399"/>
        <end position="407"/>
    </location>
    <ligand>
        <name>ATP</name>
        <dbReference type="ChEBI" id="CHEBI:30616"/>
    </ligand>
</feature>
<feature type="binding site" evidence="5">
    <location>
        <position position="422"/>
    </location>
    <ligand>
        <name>ATP</name>
        <dbReference type="ChEBI" id="CHEBI:30616"/>
    </ligand>
</feature>
<feature type="modified residue" description="Phosphothreonine" evidence="3">
    <location>
        <position position="61"/>
    </location>
</feature>
<feature type="modified residue" description="Phosphoserine" evidence="3">
    <location>
        <position position="361"/>
    </location>
</feature>
<feature type="modified residue" description="Phosphoserine" evidence="2">
    <location>
        <position position="646"/>
    </location>
</feature>
<feature type="modified residue" description="Phosphothreonine" evidence="2">
    <location>
        <position position="665"/>
    </location>
</feature>
<feature type="splice variant" id="VSP_038892" description="In isoform 3, isoform 4 and isoform 5." evidence="14 15">
    <original>V</original>
    <variation>VKRAGHSSAYSTAKSPV</variation>
    <location>
        <position position="320"/>
    </location>
</feature>
<feature type="splice variant" id="VSP_012797" description="In isoform 2, isoform 3 and isoform 5." evidence="13 14 15">
    <location>
        <position position="352"/>
    </location>
</feature>
<feature type="splice variant" id="VSP_038893" description="In isoform 6." evidence="13">
    <location>
        <begin position="625"/>
        <end position="651"/>
    </location>
</feature>
<feature type="splice variant" id="VSP_038894" description="In isoform 6." evidence="13">
    <original>NTALDKEGQIFCSKLCQDSSRPSREQTSPVPPSAQEAPPPLESPRPPGPPATSGCDLAGTWRRHRD</original>
    <variation>VSGTQSSASESRGWPSWSCCLDSQGSAHGSWCLPCSCLHGGLPGM</variation>
    <location>
        <begin position="691"/>
        <end position="756"/>
    </location>
</feature>
<feature type="splice variant" id="VSP_038895" description="In isoform 4 and isoform 5." evidence="14">
    <original>NTALDKEGQ</original>
    <variation>VQGHEHGSR</variation>
    <location>
        <begin position="691"/>
        <end position="699"/>
    </location>
</feature>
<feature type="splice variant" id="VSP_038896" description="In isoform 4 and isoform 5." evidence="14">
    <location>
        <begin position="700"/>
        <end position="756"/>
    </location>
</feature>
<feature type="mutagenesis site" description="Loss of kinase activity. No effect on colocalization with microtubules." evidence="9">
    <original>K</original>
    <variation>A</variation>
    <location>
        <position position="422"/>
    </location>
</feature>
<feature type="sequence conflict" description="In Ref. 1; AAY40245." evidence="16" ref="1">
    <original>G</original>
    <variation>D</variation>
    <location>
        <position position="33"/>
    </location>
</feature>
<keyword id="KW-0025">Alternative splicing</keyword>
<keyword id="KW-0067">ATP-binding</keyword>
<keyword id="KW-0963">Cytoplasm</keyword>
<keyword id="KW-0206">Cytoskeleton</keyword>
<keyword id="KW-0418">Kinase</keyword>
<keyword id="KW-0547">Nucleotide-binding</keyword>
<keyword id="KW-0597">Phosphoprotein</keyword>
<keyword id="KW-1185">Reference proteome</keyword>
<keyword id="KW-0677">Repeat</keyword>
<keyword id="KW-0723">Serine/threonine-protein kinase</keyword>
<keyword id="KW-0808">Transferase</keyword>